<protein>
    <recommendedName>
        <fullName>Putative F-box protein At3g24700</fullName>
    </recommendedName>
</protein>
<reference key="1">
    <citation type="journal article" date="2000" name="DNA Res.">
        <title>Structural analysis of Arabidopsis thaliana chromosome 3. II. Sequence features of the 4,251,695 bp regions covered by 90 P1, TAC and BAC clones.</title>
        <authorList>
            <person name="Kaneko T."/>
            <person name="Katoh T."/>
            <person name="Sato S."/>
            <person name="Nakamura Y."/>
            <person name="Asamizu E."/>
            <person name="Tabata S."/>
        </authorList>
    </citation>
    <scope>NUCLEOTIDE SEQUENCE [LARGE SCALE GENOMIC DNA]</scope>
    <source>
        <strain>cv. Columbia</strain>
    </source>
</reference>
<reference key="2">
    <citation type="journal article" date="2017" name="Plant J.">
        <title>Araport11: a complete reannotation of the Arabidopsis thaliana reference genome.</title>
        <authorList>
            <person name="Cheng C.Y."/>
            <person name="Krishnakumar V."/>
            <person name="Chan A.P."/>
            <person name="Thibaud-Nissen F."/>
            <person name="Schobel S."/>
            <person name="Town C.D."/>
        </authorList>
    </citation>
    <scope>GENOME REANNOTATION</scope>
    <source>
        <strain>cv. Columbia</strain>
    </source>
</reference>
<gene>
    <name type="ordered locus">At3g24700</name>
    <name type="ORF">MSD24.8</name>
</gene>
<organism>
    <name type="scientific">Arabidopsis thaliana</name>
    <name type="common">Mouse-ear cress</name>
    <dbReference type="NCBI Taxonomy" id="3702"/>
    <lineage>
        <taxon>Eukaryota</taxon>
        <taxon>Viridiplantae</taxon>
        <taxon>Streptophyta</taxon>
        <taxon>Embryophyta</taxon>
        <taxon>Tracheophyta</taxon>
        <taxon>Spermatophyta</taxon>
        <taxon>Magnoliopsida</taxon>
        <taxon>eudicotyledons</taxon>
        <taxon>Gunneridae</taxon>
        <taxon>Pentapetalae</taxon>
        <taxon>rosids</taxon>
        <taxon>malvids</taxon>
        <taxon>Brassicales</taxon>
        <taxon>Brassicaceae</taxon>
        <taxon>Camelineae</taxon>
        <taxon>Arabidopsis</taxon>
    </lineage>
</organism>
<evidence type="ECO:0000255" key="1">
    <source>
        <dbReference type="PROSITE-ProRule" id="PRU00080"/>
    </source>
</evidence>
<evidence type="ECO:0000305" key="2"/>
<name>FB185_ARATH</name>
<feature type="chain" id="PRO_0000283455" description="Putative F-box protein At3g24700">
    <location>
        <begin position="1"/>
        <end position="270"/>
    </location>
</feature>
<feature type="domain" description="F-box" evidence="1">
    <location>
        <begin position="1"/>
        <end position="45"/>
    </location>
</feature>
<dbReference type="EMBL" id="AP000740">
    <property type="protein sequence ID" value="BAB01219.1"/>
    <property type="molecule type" value="Genomic_DNA"/>
</dbReference>
<dbReference type="EMBL" id="CP002686">
    <property type="protein sequence ID" value="AEE76937.1"/>
    <property type="status" value="ALT_SEQ"/>
    <property type="molecule type" value="Genomic_DNA"/>
</dbReference>
<dbReference type="EMBL" id="CP002686">
    <property type="protein sequence ID" value="ANM66009.1"/>
    <property type="molecule type" value="Genomic_DNA"/>
</dbReference>
<dbReference type="RefSeq" id="NP_001327936.1">
    <property type="nucleotide sequence ID" value="NM_001338699.1"/>
</dbReference>
<dbReference type="RefSeq" id="NP_189113.1">
    <property type="nucleotide sequence ID" value="NM_113381.1"/>
</dbReference>
<dbReference type="SMR" id="Q9LJ39"/>
<dbReference type="FunCoup" id="Q9LJ39">
    <property type="interactions" value="33"/>
</dbReference>
<dbReference type="PaxDb" id="3702-AT3G24700.1"/>
<dbReference type="DNASU" id="822067"/>
<dbReference type="EnsemblPlants" id="AT3G24700.2">
    <property type="protein sequence ID" value="AT3G24700.2"/>
    <property type="gene ID" value="AT3G24700"/>
</dbReference>
<dbReference type="GeneID" id="822067"/>
<dbReference type="Gramene" id="AT3G24700.2">
    <property type="protein sequence ID" value="AT3G24700.2"/>
    <property type="gene ID" value="AT3G24700"/>
</dbReference>
<dbReference type="KEGG" id="ath:AT3G24700"/>
<dbReference type="Araport" id="AT3G24700"/>
<dbReference type="TAIR" id="AT3G24700"/>
<dbReference type="InParanoid" id="Q9LJ39"/>
<dbReference type="PhylomeDB" id="Q9LJ39"/>
<dbReference type="PRO" id="PR:Q9LJ39"/>
<dbReference type="Proteomes" id="UP000006548">
    <property type="component" value="Chromosome 3"/>
</dbReference>
<dbReference type="CDD" id="cd22157">
    <property type="entry name" value="F-box_AtFBW1-like"/>
    <property type="match status" value="1"/>
</dbReference>
<dbReference type="Gene3D" id="1.20.1280.50">
    <property type="match status" value="1"/>
</dbReference>
<dbReference type="InterPro" id="IPR017451">
    <property type="entry name" value="F-box-assoc_interact_dom"/>
</dbReference>
<dbReference type="InterPro" id="IPR036047">
    <property type="entry name" value="F-box-like_dom_sf"/>
</dbReference>
<dbReference type="InterPro" id="IPR001810">
    <property type="entry name" value="F-box_dom"/>
</dbReference>
<dbReference type="InterPro" id="IPR050796">
    <property type="entry name" value="SCF_F-box_component"/>
</dbReference>
<dbReference type="NCBIfam" id="TIGR01640">
    <property type="entry name" value="F_box_assoc_1"/>
    <property type="match status" value="1"/>
</dbReference>
<dbReference type="PANTHER" id="PTHR31672">
    <property type="entry name" value="BNACNNG10540D PROTEIN"/>
    <property type="match status" value="1"/>
</dbReference>
<dbReference type="PANTHER" id="PTHR31672:SF13">
    <property type="entry name" value="F-BOX PROTEIN CPR30-LIKE"/>
    <property type="match status" value="1"/>
</dbReference>
<dbReference type="Pfam" id="PF00646">
    <property type="entry name" value="F-box"/>
    <property type="match status" value="1"/>
</dbReference>
<dbReference type="SMART" id="SM00256">
    <property type="entry name" value="FBOX"/>
    <property type="match status" value="1"/>
</dbReference>
<dbReference type="SUPFAM" id="SSF81383">
    <property type="entry name" value="F-box domain"/>
    <property type="match status" value="1"/>
</dbReference>
<dbReference type="PROSITE" id="PS50181">
    <property type="entry name" value="FBOX"/>
    <property type="match status" value="1"/>
</dbReference>
<proteinExistence type="predicted"/>
<sequence>MLTDLPLDLESEILSRVPATSLQRLKTTCKRWYALFRDPRFVKKNLGKAATHVIFDNRSGYSMTDINSLIHSINLRGIQNSFDPSIGVDVKLNVLKDPRHDKISHIISHCDGLLLCKTEDYGRLVVWNPCTGQIKWIQANNMLMDVYVLGYVNNNKSCNSYKILNFGILPLNSSHDNKSKIYEFNSDSWRILDHVSPGYFAISKAMTLKGNAYWFASDWSGTKTRTRIYFAKEGIQVHQEIAQKPKKCGPFLVSYVPSLVQIQSGNKQSS</sequence>
<accession>Q9LJ39</accession>
<accession>F4J7R3</accession>
<comment type="sequence caution" evidence="2">
    <conflict type="erroneous gene model prediction">
        <sequence resource="EMBL-CDS" id="AEE76937"/>
    </conflict>
</comment>
<keyword id="KW-1185">Reference proteome</keyword>